<proteinExistence type="inferred from homology"/>
<keyword id="KW-0963">Cytoplasm</keyword>
<keyword id="KW-0255">Endonuclease</keyword>
<keyword id="KW-0378">Hydrolase</keyword>
<keyword id="KW-0479">Metal-binding</keyword>
<keyword id="KW-0540">Nuclease</keyword>
<keyword id="KW-0690">Ribosome biogenesis</keyword>
<keyword id="KW-0698">rRNA processing</keyword>
<keyword id="KW-0862">Zinc</keyword>
<gene>
    <name evidence="1" type="primary">ybeY</name>
    <name type="ordered locus">ROP_09630</name>
</gene>
<reference key="1">
    <citation type="submission" date="2009-03" db="EMBL/GenBank/DDBJ databases">
        <title>Comparison of the complete genome sequences of Rhodococcus erythropolis PR4 and Rhodococcus opacus B4.</title>
        <authorList>
            <person name="Takarada H."/>
            <person name="Sekine M."/>
            <person name="Hosoyama A."/>
            <person name="Yamada R."/>
            <person name="Fujisawa T."/>
            <person name="Omata S."/>
            <person name="Shimizu A."/>
            <person name="Tsukatani N."/>
            <person name="Tanikawa S."/>
            <person name="Fujita N."/>
            <person name="Harayama S."/>
        </authorList>
    </citation>
    <scope>NUCLEOTIDE SEQUENCE [LARGE SCALE GENOMIC DNA]</scope>
    <source>
        <strain>B4</strain>
    </source>
</reference>
<accession>C1AUK2</accession>
<sequence length="180" mass="19795">MSIEVSNESGMDVSEEELISVARFVIARMDVHPAAELSMVLVDSATMADLHMRWMDLPGPTDVMSFPMDELEPGGRPDSPEPGPSMLGDIVLCPSFAADQAEKAGHPLAHELALLTVHGVLHLLGYDHAEPEEEKEMFGLQNQLLDDWYEDLRRAERDAALAARDQKLLGKAGFFDAPDQ</sequence>
<organism>
    <name type="scientific">Rhodococcus opacus (strain B4)</name>
    <dbReference type="NCBI Taxonomy" id="632772"/>
    <lineage>
        <taxon>Bacteria</taxon>
        <taxon>Bacillati</taxon>
        <taxon>Actinomycetota</taxon>
        <taxon>Actinomycetes</taxon>
        <taxon>Mycobacteriales</taxon>
        <taxon>Nocardiaceae</taxon>
        <taxon>Rhodococcus</taxon>
    </lineage>
</organism>
<name>YBEY_RHOOB</name>
<evidence type="ECO:0000255" key="1">
    <source>
        <dbReference type="HAMAP-Rule" id="MF_00009"/>
    </source>
</evidence>
<protein>
    <recommendedName>
        <fullName evidence="1">Endoribonuclease YbeY</fullName>
        <ecNumber evidence="1">3.1.-.-</ecNumber>
    </recommendedName>
</protein>
<comment type="function">
    <text evidence="1">Single strand-specific metallo-endoribonuclease involved in late-stage 70S ribosome quality control and in maturation of the 3' terminus of the 16S rRNA.</text>
</comment>
<comment type="cofactor">
    <cofactor evidence="1">
        <name>Zn(2+)</name>
        <dbReference type="ChEBI" id="CHEBI:29105"/>
    </cofactor>
    <text evidence="1">Binds 1 zinc ion.</text>
</comment>
<comment type="subcellular location">
    <subcellularLocation>
        <location evidence="1">Cytoplasm</location>
    </subcellularLocation>
</comment>
<comment type="similarity">
    <text evidence="1">Belongs to the endoribonuclease YbeY family.</text>
</comment>
<feature type="chain" id="PRO_1000199991" description="Endoribonuclease YbeY">
    <location>
        <begin position="1"/>
        <end position="180"/>
    </location>
</feature>
<feature type="binding site" evidence="1">
    <location>
        <position position="118"/>
    </location>
    <ligand>
        <name>Zn(2+)</name>
        <dbReference type="ChEBI" id="CHEBI:29105"/>
        <note>catalytic</note>
    </ligand>
</feature>
<feature type="binding site" evidence="1">
    <location>
        <position position="122"/>
    </location>
    <ligand>
        <name>Zn(2+)</name>
        <dbReference type="ChEBI" id="CHEBI:29105"/>
        <note>catalytic</note>
    </ligand>
</feature>
<feature type="binding site" evidence="1">
    <location>
        <position position="128"/>
    </location>
    <ligand>
        <name>Zn(2+)</name>
        <dbReference type="ChEBI" id="CHEBI:29105"/>
        <note>catalytic</note>
    </ligand>
</feature>
<dbReference type="EC" id="3.1.-.-" evidence="1"/>
<dbReference type="EMBL" id="AP011115">
    <property type="protein sequence ID" value="BAH49210.1"/>
    <property type="molecule type" value="Genomic_DNA"/>
</dbReference>
<dbReference type="RefSeq" id="WP_012688198.1">
    <property type="nucleotide sequence ID" value="NC_012522.1"/>
</dbReference>
<dbReference type="SMR" id="C1AUK2"/>
<dbReference type="STRING" id="632772.ROP_09630"/>
<dbReference type="KEGG" id="rop:ROP_09630"/>
<dbReference type="PATRIC" id="fig|632772.20.peg.1028"/>
<dbReference type="HOGENOM" id="CLU_106710_3_2_11"/>
<dbReference type="OrthoDB" id="9807740at2"/>
<dbReference type="Proteomes" id="UP000002212">
    <property type="component" value="Chromosome"/>
</dbReference>
<dbReference type="GO" id="GO:0005737">
    <property type="term" value="C:cytoplasm"/>
    <property type="evidence" value="ECO:0007669"/>
    <property type="project" value="UniProtKB-SubCell"/>
</dbReference>
<dbReference type="GO" id="GO:0004222">
    <property type="term" value="F:metalloendopeptidase activity"/>
    <property type="evidence" value="ECO:0007669"/>
    <property type="project" value="InterPro"/>
</dbReference>
<dbReference type="GO" id="GO:0004521">
    <property type="term" value="F:RNA endonuclease activity"/>
    <property type="evidence" value="ECO:0007669"/>
    <property type="project" value="UniProtKB-UniRule"/>
</dbReference>
<dbReference type="GO" id="GO:0008270">
    <property type="term" value="F:zinc ion binding"/>
    <property type="evidence" value="ECO:0007669"/>
    <property type="project" value="UniProtKB-UniRule"/>
</dbReference>
<dbReference type="GO" id="GO:0006364">
    <property type="term" value="P:rRNA processing"/>
    <property type="evidence" value="ECO:0007669"/>
    <property type="project" value="UniProtKB-UniRule"/>
</dbReference>
<dbReference type="Gene3D" id="3.40.390.30">
    <property type="entry name" value="Metalloproteases ('zincins'), catalytic domain"/>
    <property type="match status" value="1"/>
</dbReference>
<dbReference type="HAMAP" id="MF_00009">
    <property type="entry name" value="Endoribonucl_YbeY"/>
    <property type="match status" value="1"/>
</dbReference>
<dbReference type="InterPro" id="IPR023091">
    <property type="entry name" value="MetalPrtase_cat_dom_sf_prd"/>
</dbReference>
<dbReference type="InterPro" id="IPR002036">
    <property type="entry name" value="YbeY"/>
</dbReference>
<dbReference type="InterPro" id="IPR020549">
    <property type="entry name" value="YbeY_CS"/>
</dbReference>
<dbReference type="NCBIfam" id="TIGR00043">
    <property type="entry name" value="rRNA maturation RNase YbeY"/>
    <property type="match status" value="1"/>
</dbReference>
<dbReference type="PANTHER" id="PTHR46986">
    <property type="entry name" value="ENDORIBONUCLEASE YBEY, CHLOROPLASTIC"/>
    <property type="match status" value="1"/>
</dbReference>
<dbReference type="PANTHER" id="PTHR46986:SF1">
    <property type="entry name" value="ENDORIBONUCLEASE YBEY, CHLOROPLASTIC"/>
    <property type="match status" value="1"/>
</dbReference>
<dbReference type="Pfam" id="PF02130">
    <property type="entry name" value="YbeY"/>
    <property type="match status" value="1"/>
</dbReference>
<dbReference type="SUPFAM" id="SSF55486">
    <property type="entry name" value="Metalloproteases ('zincins'), catalytic domain"/>
    <property type="match status" value="1"/>
</dbReference>
<dbReference type="PROSITE" id="PS01306">
    <property type="entry name" value="UPF0054"/>
    <property type="match status" value="1"/>
</dbReference>